<feature type="chain" id="PRO_1000141981" description="Large ribosomal subunit protein uL24">
    <location>
        <begin position="1"/>
        <end position="111"/>
    </location>
</feature>
<protein>
    <recommendedName>
        <fullName evidence="1">Large ribosomal subunit protein uL24</fullName>
    </recommendedName>
    <alternativeName>
        <fullName evidence="2">50S ribosomal protein L24</fullName>
    </alternativeName>
</protein>
<organism>
    <name type="scientific">Chlamydia trachomatis serovar L2 (strain ATCC VR-902B / DSM 19102 / 434/Bu)</name>
    <dbReference type="NCBI Taxonomy" id="471472"/>
    <lineage>
        <taxon>Bacteria</taxon>
        <taxon>Pseudomonadati</taxon>
        <taxon>Chlamydiota</taxon>
        <taxon>Chlamydiia</taxon>
        <taxon>Chlamydiales</taxon>
        <taxon>Chlamydiaceae</taxon>
        <taxon>Chlamydia/Chlamydophila group</taxon>
        <taxon>Chlamydia</taxon>
    </lineage>
</organism>
<name>RL24_CHLT2</name>
<accession>B0B891</accession>
<accession>O84523</accession>
<accession>P28537</accession>
<reference key="1">
    <citation type="journal article" date="1992" name="J. Bacteriol.">
        <title>Cloning and sequence analysis of the Chlamydia trachomatis spc ribosomal protein gene cluster.</title>
        <authorList>
            <person name="Kaul R."/>
            <person name="Gray G.J."/>
            <person name="Koehncke N.R."/>
            <person name="Gu L.J."/>
        </authorList>
    </citation>
    <scope>NUCLEOTIDE SEQUENCE [GENOMIC DNA]</scope>
</reference>
<reference key="2">
    <citation type="journal article" date="2008" name="Genome Res.">
        <title>Chlamydia trachomatis: genome sequence analysis of lymphogranuloma venereum isolates.</title>
        <authorList>
            <person name="Thomson N.R."/>
            <person name="Holden M.T.G."/>
            <person name="Carder C."/>
            <person name="Lennard N."/>
            <person name="Lockey S.J."/>
            <person name="Marsh P."/>
            <person name="Skipp P."/>
            <person name="O'Connor C.D."/>
            <person name="Goodhead I."/>
            <person name="Norbertzcak H."/>
            <person name="Harris B."/>
            <person name="Ormond D."/>
            <person name="Rance R."/>
            <person name="Quail M.A."/>
            <person name="Parkhill J."/>
            <person name="Stephens R.S."/>
            <person name="Clarke I.N."/>
        </authorList>
    </citation>
    <scope>NUCLEOTIDE SEQUENCE [LARGE SCALE GENOMIC DNA]</scope>
    <source>
        <strain>ATCC VR-902B / DSM 19102 / 434/Bu</strain>
    </source>
</reference>
<gene>
    <name evidence="1" type="primary">rplX</name>
    <name type="ordered locus">CTL0779</name>
</gene>
<comment type="function">
    <text evidence="1">One of two assembly initiator proteins, it binds directly to the 5'-end of the 23S rRNA, where it nucleates assembly of the 50S subunit.</text>
</comment>
<comment type="function">
    <text evidence="1">One of the proteins that surrounds the polypeptide exit tunnel on the outside of the subunit.</text>
</comment>
<comment type="subunit">
    <text evidence="1">Part of the 50S ribosomal subunit.</text>
</comment>
<comment type="similarity">
    <text evidence="1">Belongs to the universal ribosomal protein uL24 family.</text>
</comment>
<dbReference type="EMBL" id="M80325">
    <property type="protein sequence ID" value="AAA23173.1"/>
    <property type="molecule type" value="Genomic_DNA"/>
</dbReference>
<dbReference type="EMBL" id="AM884176">
    <property type="protein sequence ID" value="CAP04217.1"/>
    <property type="molecule type" value="Genomic_DNA"/>
</dbReference>
<dbReference type="PIR" id="E42645">
    <property type="entry name" value="E42645"/>
</dbReference>
<dbReference type="RefSeq" id="WP_009872719.1">
    <property type="nucleotide sequence ID" value="NC_010287.1"/>
</dbReference>
<dbReference type="RefSeq" id="YP_001654850.1">
    <property type="nucleotide sequence ID" value="NC_010287.1"/>
</dbReference>
<dbReference type="SMR" id="B0B891"/>
<dbReference type="GeneID" id="1246171"/>
<dbReference type="KEGG" id="ctb:CTL0779"/>
<dbReference type="PATRIC" id="fig|471472.4.peg.835"/>
<dbReference type="HOGENOM" id="CLU_093315_2_0_0"/>
<dbReference type="PRO" id="PR:B0B891"/>
<dbReference type="Proteomes" id="UP001154402">
    <property type="component" value="Chromosome"/>
</dbReference>
<dbReference type="GO" id="GO:1990904">
    <property type="term" value="C:ribonucleoprotein complex"/>
    <property type="evidence" value="ECO:0007669"/>
    <property type="project" value="UniProtKB-KW"/>
</dbReference>
<dbReference type="GO" id="GO:0005840">
    <property type="term" value="C:ribosome"/>
    <property type="evidence" value="ECO:0007669"/>
    <property type="project" value="UniProtKB-KW"/>
</dbReference>
<dbReference type="GO" id="GO:0019843">
    <property type="term" value="F:rRNA binding"/>
    <property type="evidence" value="ECO:0007669"/>
    <property type="project" value="UniProtKB-UniRule"/>
</dbReference>
<dbReference type="GO" id="GO:0003735">
    <property type="term" value="F:structural constituent of ribosome"/>
    <property type="evidence" value="ECO:0007669"/>
    <property type="project" value="InterPro"/>
</dbReference>
<dbReference type="GO" id="GO:0006412">
    <property type="term" value="P:translation"/>
    <property type="evidence" value="ECO:0007669"/>
    <property type="project" value="UniProtKB-UniRule"/>
</dbReference>
<dbReference type="CDD" id="cd06089">
    <property type="entry name" value="KOW_RPL26"/>
    <property type="match status" value="1"/>
</dbReference>
<dbReference type="Gene3D" id="2.30.30.30">
    <property type="match status" value="1"/>
</dbReference>
<dbReference type="HAMAP" id="MF_01326_B">
    <property type="entry name" value="Ribosomal_uL24_B"/>
    <property type="match status" value="1"/>
</dbReference>
<dbReference type="InterPro" id="IPR005824">
    <property type="entry name" value="KOW"/>
</dbReference>
<dbReference type="InterPro" id="IPR014722">
    <property type="entry name" value="Rib_uL2_dom2"/>
</dbReference>
<dbReference type="InterPro" id="IPR003256">
    <property type="entry name" value="Ribosomal_uL24"/>
</dbReference>
<dbReference type="InterPro" id="IPR005825">
    <property type="entry name" value="Ribosomal_uL24_CS"/>
</dbReference>
<dbReference type="InterPro" id="IPR041988">
    <property type="entry name" value="Ribosomal_uL24_KOW"/>
</dbReference>
<dbReference type="InterPro" id="IPR008991">
    <property type="entry name" value="Translation_prot_SH3-like_sf"/>
</dbReference>
<dbReference type="NCBIfam" id="TIGR01079">
    <property type="entry name" value="rplX_bact"/>
    <property type="match status" value="1"/>
</dbReference>
<dbReference type="PANTHER" id="PTHR12903">
    <property type="entry name" value="MITOCHONDRIAL RIBOSOMAL PROTEIN L24"/>
    <property type="match status" value="1"/>
</dbReference>
<dbReference type="Pfam" id="PF00467">
    <property type="entry name" value="KOW"/>
    <property type="match status" value="1"/>
</dbReference>
<dbReference type="Pfam" id="PF17136">
    <property type="entry name" value="ribosomal_L24"/>
    <property type="match status" value="1"/>
</dbReference>
<dbReference type="SMART" id="SM00739">
    <property type="entry name" value="KOW"/>
    <property type="match status" value="1"/>
</dbReference>
<dbReference type="SUPFAM" id="SSF50104">
    <property type="entry name" value="Translation proteins SH3-like domain"/>
    <property type="match status" value="1"/>
</dbReference>
<dbReference type="PROSITE" id="PS01108">
    <property type="entry name" value="RIBOSOMAL_L24"/>
    <property type="match status" value="1"/>
</dbReference>
<keyword id="KW-0687">Ribonucleoprotein</keyword>
<keyword id="KW-0689">Ribosomal protein</keyword>
<keyword id="KW-0694">RNA-binding</keyword>
<keyword id="KW-0699">rRNA-binding</keyword>
<sequence length="111" mass="12608">MKRRSVCVGDTVYVLAGNDKGKQGKVLRCLKDKVVVEGINVRVKNIKRSQENPKGKRINIEAPLHISNVRLSIDNQPARLFVKVTEKGRELWNKHSDGSSSLYRLVRERKG</sequence>
<evidence type="ECO:0000255" key="1">
    <source>
        <dbReference type="HAMAP-Rule" id="MF_01326"/>
    </source>
</evidence>
<evidence type="ECO:0000305" key="2"/>
<proteinExistence type="inferred from homology"/>